<protein>
    <recommendedName>
        <fullName>Surface presentation of antigens protein SpaQ</fullName>
    </recommendedName>
</protein>
<comment type="function">
    <text>Involved in a secretory pathway responsible for the surface presentation of determinants needed for the entry of Salmonella species into mammalian cells.</text>
</comment>
<comment type="subcellular location">
    <subcellularLocation>
        <location evidence="2">Cell membrane</location>
        <topology evidence="2">Multi-pass membrane protein</topology>
    </subcellularLocation>
</comment>
<comment type="similarity">
    <text evidence="2">Belongs to the FliQ/MopD/SpaQ family.</text>
</comment>
<sequence>MDDLVFAGNKALYLVLILSGWPTIVATIIGLLVGLFQTVTQLQEQTLPFGIKLLGVCLCLFLLSGWYGEVLLSYGRQVIFLALAKG</sequence>
<gene>
    <name type="primary">spaQ</name>
</gene>
<feature type="chain" id="PRO_0000129106" description="Surface presentation of antigens protein SpaQ">
    <location>
        <begin position="1"/>
        <end position="86"/>
    </location>
</feature>
<feature type="transmembrane region" description="Helical" evidence="1">
    <location>
        <begin position="16"/>
        <end position="36"/>
    </location>
</feature>
<feature type="transmembrane region" description="Helical" evidence="1">
    <location>
        <begin position="53"/>
        <end position="73"/>
    </location>
</feature>
<reference key="1">
    <citation type="journal article" date="1995" name="Proc. Natl. Acad. Sci. U.S.A.">
        <title>Relationship between evolutionary rate and cellular location among the Inv/Spa invasion proteins of Salmonella enterica.</title>
        <authorList>
            <person name="Li J."/>
            <person name="Ochman H."/>
            <person name="Groisman E.A."/>
            <person name="Boyd E.F."/>
            <person name="Solomon F."/>
            <person name="Nelson K."/>
            <person name="Selander R.K."/>
        </authorList>
    </citation>
    <scope>NUCLEOTIDE SEQUENCE [GENOMIC DNA]</scope>
    <source>
        <strain>s2358</strain>
    </source>
</reference>
<dbReference type="EMBL" id="U29346">
    <property type="protein sequence ID" value="AAC43967.1"/>
    <property type="molecule type" value="Genomic_DNA"/>
</dbReference>
<dbReference type="RefSeq" id="WP_000342503.1">
    <property type="nucleotide sequence ID" value="NZ_VIOC01000003.1"/>
</dbReference>
<dbReference type="SMR" id="P0A1M2"/>
<dbReference type="GO" id="GO:0005886">
    <property type="term" value="C:plasma membrane"/>
    <property type="evidence" value="ECO:0007669"/>
    <property type="project" value="UniProtKB-SubCell"/>
</dbReference>
<dbReference type="GO" id="GO:0009306">
    <property type="term" value="P:protein secretion"/>
    <property type="evidence" value="ECO:0007669"/>
    <property type="project" value="InterPro"/>
</dbReference>
<dbReference type="InterPro" id="IPR002191">
    <property type="entry name" value="Bac_export_3"/>
</dbReference>
<dbReference type="InterPro" id="IPR006306">
    <property type="entry name" value="T3SS_HrpO"/>
</dbReference>
<dbReference type="NCBIfam" id="TIGR01403">
    <property type="entry name" value="fliQ_rel_III"/>
    <property type="match status" value="1"/>
</dbReference>
<dbReference type="NCBIfam" id="NF011861">
    <property type="entry name" value="PRK15333.1"/>
    <property type="match status" value="1"/>
</dbReference>
<dbReference type="PANTHER" id="PTHR34040">
    <property type="entry name" value="FLAGELLAR BIOSYNTHETIC PROTEIN FLIQ"/>
    <property type="match status" value="1"/>
</dbReference>
<dbReference type="PANTHER" id="PTHR34040:SF7">
    <property type="entry name" value="SURFACE PRESENTATION OF ANTIGENS PROTEIN SPAQ"/>
    <property type="match status" value="1"/>
</dbReference>
<dbReference type="Pfam" id="PF01313">
    <property type="entry name" value="Bac_export_3"/>
    <property type="match status" value="1"/>
</dbReference>
<dbReference type="PRINTS" id="PR00952">
    <property type="entry name" value="TYPE3IMQPROT"/>
</dbReference>
<organism>
    <name type="scientific">Salmonella senftenberg</name>
    <dbReference type="NCBI Taxonomy" id="28150"/>
    <lineage>
        <taxon>Bacteria</taxon>
        <taxon>Pseudomonadati</taxon>
        <taxon>Pseudomonadota</taxon>
        <taxon>Gammaproteobacteria</taxon>
        <taxon>Enterobacterales</taxon>
        <taxon>Enterobacteriaceae</taxon>
        <taxon>Salmonella</taxon>
    </lineage>
</organism>
<evidence type="ECO:0000255" key="1"/>
<evidence type="ECO:0000305" key="2"/>
<keyword id="KW-1003">Cell membrane</keyword>
<keyword id="KW-0472">Membrane</keyword>
<keyword id="KW-0812">Transmembrane</keyword>
<keyword id="KW-1133">Transmembrane helix</keyword>
<keyword id="KW-0843">Virulence</keyword>
<proteinExistence type="inferred from homology"/>
<name>SPAQ_SALSE</name>
<accession>P0A1M2</accession>
<accession>P40704</accession>
<accession>Q54011</accession>
<accession>Q54013</accession>
<accession>Q57117</accession>
<accession>Q57533</accession>